<proteinExistence type="inferred from homology"/>
<keyword id="KW-0053">Apoptosis</keyword>
<keyword id="KW-0244">Early protein</keyword>
<keyword id="KW-1032">Host cell membrane</keyword>
<keyword id="KW-1035">Host cytoplasm</keyword>
<keyword id="KW-1043">Host membrane</keyword>
<keyword id="KW-0945">Host-virus interaction</keyword>
<keyword id="KW-0449">Lipoprotein</keyword>
<keyword id="KW-0472">Membrane</keyword>
<keyword id="KW-0519">Myristate</keyword>
<keyword id="KW-0597">Phosphoprotein</keyword>
<keyword id="KW-1185">Reference proteome</keyword>
<keyword id="KW-0964">Secreted</keyword>
<keyword id="KW-0729">SH3-binding</keyword>
<keyword id="KW-0899">Viral immunoevasion</keyword>
<keyword id="KW-0946">Virion</keyword>
<keyword id="KW-0843">Virulence</keyword>
<reference key="1">
    <citation type="journal article" date="2003" name="J. Virol.">
        <title>Amplification of a complete simian immunodeficiency virus genome from fecal RNA of a wild chimpanzee.</title>
        <authorList>
            <person name="Santiago M.L."/>
            <person name="Bibollet-Ruche F."/>
            <person name="Bailes E."/>
            <person name="Kamenya S."/>
            <person name="Muller M.N."/>
            <person name="Lukasik M."/>
            <person name="Pusey A.E."/>
            <person name="Collins D.A."/>
            <person name="Wrangham R.W."/>
            <person name="Goodall J."/>
            <person name="Shaw G.M."/>
            <person name="Sharp P.M."/>
            <person name="Hahn B.H."/>
        </authorList>
    </citation>
    <scope>NUCLEOTIDE SEQUENCE [GENOMIC RNA]</scope>
</reference>
<feature type="initiator methionine" description="Removed; by host" evidence="1">
    <location>
        <position position="1"/>
    </location>
</feature>
<feature type="chain" id="PRO_0000248192" description="Protein Nef">
    <location>
        <begin position="2"/>
        <end position="195"/>
    </location>
</feature>
<feature type="region of interest" description="N-terminal; associates with the host plasma membrane" evidence="1">
    <location>
        <begin position="2"/>
        <end position="53"/>
    </location>
</feature>
<feature type="region of interest" description="Necessary for MHC-I internalization" evidence="1">
    <location>
        <begin position="7"/>
        <end position="22"/>
    </location>
</feature>
<feature type="region of interest" description="Acidic">
    <location>
        <begin position="59"/>
        <end position="61"/>
    </location>
</feature>
<feature type="region of interest" description="SH3-binding" evidence="1">
    <location>
        <begin position="65"/>
        <end position="74"/>
    </location>
</feature>
<feature type="region of interest" description="SH3-binding; interaction with Src family tyrosine kinases" evidence="1">
    <location>
        <begin position="65"/>
        <end position="74"/>
    </location>
</feature>
<feature type="region of interest" description="Mediates dimerization" evidence="1">
    <location>
        <begin position="104"/>
        <end position="120"/>
    </location>
</feature>
<feature type="region of interest" description="Binding to ATP6V1H" evidence="1">
    <location>
        <begin position="144"/>
        <end position="171"/>
    </location>
</feature>
<feature type="short sequence motif" description="PxxP">
    <location>
        <begin position="68"/>
        <end position="71"/>
    </location>
</feature>
<feature type="short sequence motif" description="Di-leucine internalization motif; necessary for CD4 internalization" evidence="1">
    <location>
        <begin position="155"/>
        <end position="156"/>
    </location>
</feature>
<feature type="lipid moiety-binding region" description="N-myristoyl glycine; by host" evidence="1">
    <location>
        <position position="2"/>
    </location>
</feature>
<protein>
    <recommendedName>
        <fullName>Protein Nef</fullName>
    </recommendedName>
    <alternativeName>
        <fullName>3'ORF</fullName>
    </alternativeName>
    <alternativeName>
        <fullName>Negative factor</fullName>
        <shortName>F-protein</shortName>
    </alternativeName>
</protein>
<organismHost>
    <name type="scientific">Pan troglodytes</name>
    <name type="common">Chimpanzee</name>
    <dbReference type="NCBI Taxonomy" id="9598"/>
</organismHost>
<sequence length="195" mass="22007">MGNIFGRWPGARKAIEDLHNTSSEPVGQASQDLQNKGGLTTNTLGTSADVLEYSADHTEEEVGFPVRPAVPMRPMTEKLAIDLSWFLKEKGGLDGLFFSPKRAAILDTWMYNTQGVFPDWQNYTPGPGIRYPLCRGWLFKLVPVDPPEDDEKNILLHPACSHGTTDPDGETLIWRFDSSLARRHIARERYPEYFK</sequence>
<dbReference type="EMBL" id="AF447763">
    <property type="protein sequence ID" value="AAO13967.1"/>
    <property type="molecule type" value="Genomic_RNA"/>
</dbReference>
<dbReference type="SMR" id="Q8AIH4"/>
<dbReference type="Proteomes" id="UP000007222">
    <property type="component" value="Segment"/>
</dbReference>
<dbReference type="GO" id="GO:0005576">
    <property type="term" value="C:extracellular region"/>
    <property type="evidence" value="ECO:0007669"/>
    <property type="project" value="UniProtKB-SubCell"/>
</dbReference>
<dbReference type="GO" id="GO:0044220">
    <property type="term" value="C:host cell perinuclear region of cytoplasm"/>
    <property type="evidence" value="ECO:0007669"/>
    <property type="project" value="UniProtKB-SubCell"/>
</dbReference>
<dbReference type="GO" id="GO:0020002">
    <property type="term" value="C:host cell plasma membrane"/>
    <property type="evidence" value="ECO:0007669"/>
    <property type="project" value="UniProtKB-SubCell"/>
</dbReference>
<dbReference type="GO" id="GO:0016020">
    <property type="term" value="C:membrane"/>
    <property type="evidence" value="ECO:0007669"/>
    <property type="project" value="UniProtKB-KW"/>
</dbReference>
<dbReference type="GO" id="GO:0044423">
    <property type="term" value="C:virion component"/>
    <property type="evidence" value="ECO:0007669"/>
    <property type="project" value="UniProtKB-KW"/>
</dbReference>
<dbReference type="GO" id="GO:0005525">
    <property type="term" value="F:GTP binding"/>
    <property type="evidence" value="ECO:0007669"/>
    <property type="project" value="InterPro"/>
</dbReference>
<dbReference type="GO" id="GO:0017124">
    <property type="term" value="F:SH3 domain binding"/>
    <property type="evidence" value="ECO:0007669"/>
    <property type="project" value="UniProtKB-KW"/>
</dbReference>
<dbReference type="Gene3D" id="3.30.62.10">
    <property type="entry name" value="Nef Regulatory Factor"/>
    <property type="match status" value="1"/>
</dbReference>
<dbReference type="InterPro" id="IPR027481">
    <property type="entry name" value="HIV-1_Nef_core_sf"/>
</dbReference>
<dbReference type="InterPro" id="IPR001558">
    <property type="entry name" value="HIV_Nef"/>
</dbReference>
<dbReference type="Pfam" id="PF00469">
    <property type="entry name" value="F-protein"/>
    <property type="match status" value="1"/>
</dbReference>
<dbReference type="SUPFAM" id="SSF55671">
    <property type="entry name" value="Regulatory factor Nef"/>
    <property type="match status" value="1"/>
</dbReference>
<comment type="function">
    <text evidence="1">Factor of infectivity and pathogenicity, required for optimal virus replication. Alters numerous pathways of T-lymphocyte function and down-regulates immunity surface molecules in order to evade host defense and increase viral infectivity. Alters the functionality of other immunity cells, like dendritic cells, monocytes/macrophages and NK cells. One of the earliest and most abundantly expressed viral proteins (By similarity).</text>
</comment>
<comment type="function">
    <text>In infected CD4(+) T-lymphocytes, down-regulates the surface MHC-I, mature MHC-II, CD4, CD28 and probably other immunity surface molecules. In consequence infected cells are masked for immune recognition by cytotoxic T-lymphocytes. Decreasing the number of immune receptors also prevents reinfection by more HIV particles (superinfection).</text>
</comment>
<comment type="function">
    <text evidence="1">Bypasses host T-cell signaling by inducing a transcriptional program nearly identical to that of anti-CD3 cell activation. Interaction with TCR-zeta chain up-regulates the Fas ligand (FasL). Increasing surface FasL molecules and decreasing surface MHC-I molecules on infected CD4(+) cells send attacking cytotoxic CD8+ T-lymphocytes into apoptosis (By similarity).</text>
</comment>
<comment type="function">
    <text evidence="1">Plays a role in optimizing the host cell environment for viral replication without causing cell death by apoptosis. Protects the infected cells from apoptosis in order to keep them alive until the next virus generation is ready to strike (By similarity).</text>
</comment>
<comment type="subunit">
    <text evidence="1">Homodimer.</text>
</comment>
<comment type="subcellular location">
    <subcellularLocation>
        <location evidence="1">Host cell membrane</location>
        <topology evidence="1">Lipid-anchor</topology>
        <orientation evidence="1">Cytoplasmic side</orientation>
    </subcellularLocation>
    <subcellularLocation>
        <location evidence="1">Host cytoplasm</location>
        <location evidence="1">Host perinuclear region</location>
    </subcellularLocation>
    <subcellularLocation>
        <location evidence="1">Virion</location>
    </subcellularLocation>
    <subcellularLocation>
        <location>Secreted</location>
    </subcellularLocation>
    <text evidence="1">Predominantly found in the paranuclear area, probably in the TGN. Correct localization requires PACS1. Also associates with the inner plasma membrane through its N-terminal domain. Nef stimulates its own export via the release of exosomes. Also incorporated in virions at a rate of about 10 molecules per virion, where it is cleaved (By similarity).</text>
</comment>
<comment type="domain">
    <text evidence="1">The N-terminal domain is composed of the N-myristoyl glycine and of a cluster of positively charged amino acids. It is required for inner plasma membrane targeting of Nef and virion incorporation, and thereby for infectivity. This domain is also involved in binding to p53 (By similarity).</text>
</comment>
<comment type="domain">
    <text evidence="1">The SH3-binding domain constituted of PxxP motifs mediates binding to several Src family proteins thereby regulating their tyrosine kinase activity.</text>
</comment>
<comment type="similarity">
    <text evidence="2">Belongs to the lentivirus primate group Nef protein family.</text>
</comment>
<organism>
    <name type="scientific">Simian immunodeficiency virus (isolate TAN1)</name>
    <name type="common">SIV-cpz</name>
    <name type="synonym">Chimpanzee immunodeficiency virus</name>
    <dbReference type="NCBI Taxonomy" id="388910"/>
    <lineage>
        <taxon>Viruses</taxon>
        <taxon>Riboviria</taxon>
        <taxon>Pararnavirae</taxon>
        <taxon>Artverviricota</taxon>
        <taxon>Revtraviricetes</taxon>
        <taxon>Ortervirales</taxon>
        <taxon>Retroviridae</taxon>
        <taxon>Orthoretrovirinae</taxon>
        <taxon>Lentivirus</taxon>
        <taxon>Simian immunodeficiency virus</taxon>
    </lineage>
</organism>
<name>NEF_SIVTN</name>
<evidence type="ECO:0000250" key="1"/>
<evidence type="ECO:0000305" key="2"/>
<accession>Q8AIH4</accession>